<name>RL18_WOLPP</name>
<comment type="function">
    <text evidence="1">This is one of the proteins that bind and probably mediate the attachment of the 5S RNA into the large ribosomal subunit, where it forms part of the central protuberance.</text>
</comment>
<comment type="subunit">
    <text evidence="1">Part of the 50S ribosomal subunit; part of the 5S rRNA/L5/L18/L25 subcomplex. Contacts the 5S and 23S rRNAs.</text>
</comment>
<comment type="similarity">
    <text evidence="1">Belongs to the universal ribosomal protein uL18 family.</text>
</comment>
<gene>
    <name evidence="1" type="primary">rplR</name>
    <name type="ordered locus">WP1182</name>
</gene>
<feature type="chain" id="PRO_1000142738" description="Large ribosomal subunit protein uL18">
    <location>
        <begin position="1"/>
        <end position="123"/>
    </location>
</feature>
<sequence length="123" mass="14158">MKRLYNFLSSYEKRKLRNRAKLDKSAGRLRISIFKSNKHFYVQLINDAKGTTLASASTLDDKIRNVCKGRVNAETIKQVSSLLIERLPSTKLQQRFVFDRGAYKYTGLISQFAEALRSSGFKF</sequence>
<accession>B3CN42</accession>
<protein>
    <recommendedName>
        <fullName evidence="1">Large ribosomal subunit protein uL18</fullName>
    </recommendedName>
    <alternativeName>
        <fullName evidence="2">50S ribosomal protein L18</fullName>
    </alternativeName>
</protein>
<dbReference type="EMBL" id="AM999887">
    <property type="protein sequence ID" value="CAQ55290.1"/>
    <property type="molecule type" value="Genomic_DNA"/>
</dbReference>
<dbReference type="RefSeq" id="WP_007302548.1">
    <property type="nucleotide sequence ID" value="NC_010981.1"/>
</dbReference>
<dbReference type="SMR" id="B3CN42"/>
<dbReference type="KEGG" id="wpi:WP1182"/>
<dbReference type="eggNOG" id="COG0256">
    <property type="taxonomic scope" value="Bacteria"/>
</dbReference>
<dbReference type="HOGENOM" id="CLU_098841_0_1_5"/>
<dbReference type="Proteomes" id="UP000008814">
    <property type="component" value="Chromosome"/>
</dbReference>
<dbReference type="GO" id="GO:0022625">
    <property type="term" value="C:cytosolic large ribosomal subunit"/>
    <property type="evidence" value="ECO:0007669"/>
    <property type="project" value="TreeGrafter"/>
</dbReference>
<dbReference type="GO" id="GO:0008097">
    <property type="term" value="F:5S rRNA binding"/>
    <property type="evidence" value="ECO:0007669"/>
    <property type="project" value="TreeGrafter"/>
</dbReference>
<dbReference type="GO" id="GO:0003735">
    <property type="term" value="F:structural constituent of ribosome"/>
    <property type="evidence" value="ECO:0007669"/>
    <property type="project" value="InterPro"/>
</dbReference>
<dbReference type="GO" id="GO:0006412">
    <property type="term" value="P:translation"/>
    <property type="evidence" value="ECO:0007669"/>
    <property type="project" value="UniProtKB-UniRule"/>
</dbReference>
<dbReference type="CDD" id="cd00432">
    <property type="entry name" value="Ribosomal_L18_L5e"/>
    <property type="match status" value="1"/>
</dbReference>
<dbReference type="Gene3D" id="3.30.420.100">
    <property type="match status" value="1"/>
</dbReference>
<dbReference type="HAMAP" id="MF_01337_B">
    <property type="entry name" value="Ribosomal_uL18_B"/>
    <property type="match status" value="1"/>
</dbReference>
<dbReference type="InterPro" id="IPR004389">
    <property type="entry name" value="Ribosomal_uL18_bac-type"/>
</dbReference>
<dbReference type="InterPro" id="IPR005484">
    <property type="entry name" value="Ribosomal_uL18_bac/euk"/>
</dbReference>
<dbReference type="NCBIfam" id="TIGR00060">
    <property type="entry name" value="L18_bact"/>
    <property type="match status" value="1"/>
</dbReference>
<dbReference type="PANTHER" id="PTHR12899">
    <property type="entry name" value="39S RIBOSOMAL PROTEIN L18, MITOCHONDRIAL"/>
    <property type="match status" value="1"/>
</dbReference>
<dbReference type="PANTHER" id="PTHR12899:SF3">
    <property type="entry name" value="LARGE RIBOSOMAL SUBUNIT PROTEIN UL18M"/>
    <property type="match status" value="1"/>
</dbReference>
<dbReference type="Pfam" id="PF00861">
    <property type="entry name" value="Ribosomal_L18p"/>
    <property type="match status" value="1"/>
</dbReference>
<dbReference type="SUPFAM" id="SSF53137">
    <property type="entry name" value="Translational machinery components"/>
    <property type="match status" value="1"/>
</dbReference>
<keyword id="KW-0687">Ribonucleoprotein</keyword>
<keyword id="KW-0689">Ribosomal protein</keyword>
<keyword id="KW-0694">RNA-binding</keyword>
<keyword id="KW-0699">rRNA-binding</keyword>
<evidence type="ECO:0000255" key="1">
    <source>
        <dbReference type="HAMAP-Rule" id="MF_01337"/>
    </source>
</evidence>
<evidence type="ECO:0000305" key="2"/>
<organism>
    <name type="scientific">Wolbachia pipientis subsp. Culex pipiens (strain wPip)</name>
    <dbReference type="NCBI Taxonomy" id="570417"/>
    <lineage>
        <taxon>Bacteria</taxon>
        <taxon>Pseudomonadati</taxon>
        <taxon>Pseudomonadota</taxon>
        <taxon>Alphaproteobacteria</taxon>
        <taxon>Rickettsiales</taxon>
        <taxon>Anaplasmataceae</taxon>
        <taxon>Wolbachieae</taxon>
        <taxon>Wolbachia</taxon>
    </lineage>
</organism>
<reference key="1">
    <citation type="journal article" date="2008" name="Mol. Biol. Evol.">
        <title>Genome evolution of Wolbachia strain wPip from the Culex pipiens group.</title>
        <authorList>
            <person name="Klasson L."/>
            <person name="Walker T."/>
            <person name="Sebaihia M."/>
            <person name="Sanders M.J."/>
            <person name="Quail M.A."/>
            <person name="Lord A."/>
            <person name="Sanders S."/>
            <person name="Earl J."/>
            <person name="O'Neill S.L."/>
            <person name="Thomson N."/>
            <person name="Sinkins S.P."/>
            <person name="Parkhill J."/>
        </authorList>
    </citation>
    <scope>NUCLEOTIDE SEQUENCE [LARGE SCALE GENOMIC DNA]</scope>
    <source>
        <strain>wPip</strain>
    </source>
</reference>
<proteinExistence type="inferred from homology"/>